<accession>B1IQQ7</accession>
<feature type="chain" id="PRO_1000085724" description="N-acetylmannosamine kinase">
    <location>
        <begin position="1"/>
        <end position="291"/>
    </location>
</feature>
<feature type="binding site" evidence="1">
    <location>
        <begin position="5"/>
        <end position="12"/>
    </location>
    <ligand>
        <name>ATP</name>
        <dbReference type="ChEBI" id="CHEBI:30616"/>
    </ligand>
</feature>
<feature type="binding site" evidence="1">
    <location>
        <begin position="132"/>
        <end position="139"/>
    </location>
    <ligand>
        <name>ATP</name>
        <dbReference type="ChEBI" id="CHEBI:30616"/>
    </ligand>
</feature>
<feature type="binding site" evidence="1">
    <location>
        <position position="156"/>
    </location>
    <ligand>
        <name>Zn(2+)</name>
        <dbReference type="ChEBI" id="CHEBI:29105"/>
    </ligand>
</feature>
<feature type="binding site" evidence="1">
    <location>
        <position position="166"/>
    </location>
    <ligand>
        <name>Zn(2+)</name>
        <dbReference type="ChEBI" id="CHEBI:29105"/>
    </ligand>
</feature>
<feature type="binding site" evidence="1">
    <location>
        <position position="168"/>
    </location>
    <ligand>
        <name>Zn(2+)</name>
        <dbReference type="ChEBI" id="CHEBI:29105"/>
    </ligand>
</feature>
<feature type="binding site" evidence="1">
    <location>
        <position position="173"/>
    </location>
    <ligand>
        <name>Zn(2+)</name>
        <dbReference type="ChEBI" id="CHEBI:29105"/>
    </ligand>
</feature>
<evidence type="ECO:0000255" key="1">
    <source>
        <dbReference type="HAMAP-Rule" id="MF_01234"/>
    </source>
</evidence>
<name>NANK_ECOLC</name>
<keyword id="KW-0067">ATP-binding</keyword>
<keyword id="KW-0119">Carbohydrate metabolism</keyword>
<keyword id="KW-0418">Kinase</keyword>
<keyword id="KW-0479">Metal-binding</keyword>
<keyword id="KW-0547">Nucleotide-binding</keyword>
<keyword id="KW-0808">Transferase</keyword>
<keyword id="KW-0862">Zinc</keyword>
<comment type="function">
    <text evidence="1">Catalyzes the phosphorylation of N-acetylmannosamine (ManNAc) to ManNAc-6-P.</text>
</comment>
<comment type="catalytic activity">
    <reaction evidence="1">
        <text>an N-acyl-D-mannosamine + ATP = an N-acyl-D-mannosamine 6-phosphate + ADP + H(+)</text>
        <dbReference type="Rhea" id="RHEA:23832"/>
        <dbReference type="ChEBI" id="CHEBI:15378"/>
        <dbReference type="ChEBI" id="CHEBI:16062"/>
        <dbReference type="ChEBI" id="CHEBI:30616"/>
        <dbReference type="ChEBI" id="CHEBI:57666"/>
        <dbReference type="ChEBI" id="CHEBI:456216"/>
        <dbReference type="EC" id="2.7.1.60"/>
    </reaction>
</comment>
<comment type="pathway">
    <text evidence="1">Amino-sugar metabolism; N-acetylneuraminate degradation; D-fructose 6-phosphate from N-acetylneuraminate: step 2/5.</text>
</comment>
<comment type="subunit">
    <text evidence="1">Homodimer.</text>
</comment>
<comment type="similarity">
    <text evidence="1">Belongs to the ROK (NagC/XylR) family. NanK subfamily.</text>
</comment>
<reference key="1">
    <citation type="submission" date="2008-02" db="EMBL/GenBank/DDBJ databases">
        <title>Complete sequence of Escherichia coli C str. ATCC 8739.</title>
        <authorList>
            <person name="Copeland A."/>
            <person name="Lucas S."/>
            <person name="Lapidus A."/>
            <person name="Glavina del Rio T."/>
            <person name="Dalin E."/>
            <person name="Tice H."/>
            <person name="Bruce D."/>
            <person name="Goodwin L."/>
            <person name="Pitluck S."/>
            <person name="Kiss H."/>
            <person name="Brettin T."/>
            <person name="Detter J.C."/>
            <person name="Han C."/>
            <person name="Kuske C.R."/>
            <person name="Schmutz J."/>
            <person name="Larimer F."/>
            <person name="Land M."/>
            <person name="Hauser L."/>
            <person name="Kyrpides N."/>
            <person name="Mikhailova N."/>
            <person name="Ingram L."/>
            <person name="Richardson P."/>
        </authorList>
    </citation>
    <scope>NUCLEOTIDE SEQUENCE [LARGE SCALE GENOMIC DNA]</scope>
    <source>
        <strain>ATCC 8739 / DSM 1576 / NBRC 3972 / NCIMB 8545 / WDCM 00012 / Crooks</strain>
    </source>
</reference>
<dbReference type="EC" id="2.7.1.60" evidence="1"/>
<dbReference type="EMBL" id="CP000946">
    <property type="protein sequence ID" value="ACA76161.1"/>
    <property type="molecule type" value="Genomic_DNA"/>
</dbReference>
<dbReference type="RefSeq" id="WP_000209020.1">
    <property type="nucleotide sequence ID" value="NZ_MTFT01000027.1"/>
</dbReference>
<dbReference type="SMR" id="B1IQQ7"/>
<dbReference type="KEGG" id="ecl:EcolC_0484"/>
<dbReference type="HOGENOM" id="CLU_036604_0_4_6"/>
<dbReference type="UniPathway" id="UPA00629">
    <property type="reaction ID" value="UER00681"/>
</dbReference>
<dbReference type="GO" id="GO:0005524">
    <property type="term" value="F:ATP binding"/>
    <property type="evidence" value="ECO:0007669"/>
    <property type="project" value="UniProtKB-UniRule"/>
</dbReference>
<dbReference type="GO" id="GO:0009384">
    <property type="term" value="F:N-acylmannosamine kinase activity"/>
    <property type="evidence" value="ECO:0007669"/>
    <property type="project" value="UniProtKB-UniRule"/>
</dbReference>
<dbReference type="GO" id="GO:0008270">
    <property type="term" value="F:zinc ion binding"/>
    <property type="evidence" value="ECO:0007669"/>
    <property type="project" value="UniProtKB-UniRule"/>
</dbReference>
<dbReference type="GO" id="GO:0019262">
    <property type="term" value="P:N-acetylneuraminate catabolic process"/>
    <property type="evidence" value="ECO:0007669"/>
    <property type="project" value="UniProtKB-UniRule"/>
</dbReference>
<dbReference type="CDD" id="cd24069">
    <property type="entry name" value="ASKHA_NBD_ROK_EcNanK-like"/>
    <property type="match status" value="1"/>
</dbReference>
<dbReference type="FunFam" id="3.30.420.40:FF:000062">
    <property type="entry name" value="N-acetylmannosamine kinase"/>
    <property type="match status" value="1"/>
</dbReference>
<dbReference type="FunFam" id="3.30.420.40:FF:000063">
    <property type="entry name" value="N-acetylmannosamine kinase"/>
    <property type="match status" value="1"/>
</dbReference>
<dbReference type="Gene3D" id="3.30.420.40">
    <property type="match status" value="2"/>
</dbReference>
<dbReference type="HAMAP" id="MF_01234">
    <property type="entry name" value="ManNAc_kinase"/>
    <property type="match status" value="1"/>
</dbReference>
<dbReference type="InterPro" id="IPR043129">
    <property type="entry name" value="ATPase_NBD"/>
</dbReference>
<dbReference type="InterPro" id="IPR023945">
    <property type="entry name" value="ManNAc_kinase_bac"/>
</dbReference>
<dbReference type="InterPro" id="IPR000600">
    <property type="entry name" value="ROK"/>
</dbReference>
<dbReference type="InterPro" id="IPR049874">
    <property type="entry name" value="ROK_cs"/>
</dbReference>
<dbReference type="NCBIfam" id="NF047821">
    <property type="entry name" value="NactlManKinNanK"/>
    <property type="match status" value="1"/>
</dbReference>
<dbReference type="NCBIfam" id="NF003461">
    <property type="entry name" value="PRK05082.1"/>
    <property type="match status" value="1"/>
</dbReference>
<dbReference type="PANTHER" id="PTHR18964:SF169">
    <property type="entry name" value="N-ACETYLMANNOSAMINE KINASE"/>
    <property type="match status" value="1"/>
</dbReference>
<dbReference type="PANTHER" id="PTHR18964">
    <property type="entry name" value="ROK (REPRESSOR, ORF, KINASE) FAMILY"/>
    <property type="match status" value="1"/>
</dbReference>
<dbReference type="Pfam" id="PF00480">
    <property type="entry name" value="ROK"/>
    <property type="match status" value="1"/>
</dbReference>
<dbReference type="SUPFAM" id="SSF53067">
    <property type="entry name" value="Actin-like ATPase domain"/>
    <property type="match status" value="1"/>
</dbReference>
<dbReference type="PROSITE" id="PS01125">
    <property type="entry name" value="ROK"/>
    <property type="match status" value="1"/>
</dbReference>
<proteinExistence type="inferred from homology"/>
<sequence>MTTLAIDIGGTKLAAALIGADGQIRDRRELPTPASQTPEALRDALSALVSPLQAHAQRVAIASTGIIRDGSLLALNPHNLGGLLHFPLVKTLEQLTNLPTIAINDAQAAAWAEYQALEGDITDMVFITVSTGVGGGVVSGGKLLTGPGGLAGHIGHTLADPHGPVCGCGRTGCVEAIASGRGIAAAAQGELAGADARTIFTRAGQGDEQAQQLIHRSARTLARLIADIKATTDCQCVVVGGSVGLAEGYLALVEMYLAQEPAAFHVDLLAAHYRHDAGLLGAALLAQGEKL</sequence>
<gene>
    <name evidence="1" type="primary">nanK</name>
    <name type="ordered locus">EcolC_0484</name>
</gene>
<protein>
    <recommendedName>
        <fullName evidence="1">N-acetylmannosamine kinase</fullName>
        <ecNumber evidence="1">2.7.1.60</ecNumber>
    </recommendedName>
    <alternativeName>
        <fullName evidence="1">ManNAc kinase</fullName>
    </alternativeName>
    <alternativeName>
        <fullName evidence="1">N-acetyl-D-mannosamine kinase</fullName>
    </alternativeName>
</protein>
<organism>
    <name type="scientific">Escherichia coli (strain ATCC 8739 / DSM 1576 / NBRC 3972 / NCIMB 8545 / WDCM 00012 / Crooks)</name>
    <dbReference type="NCBI Taxonomy" id="481805"/>
    <lineage>
        <taxon>Bacteria</taxon>
        <taxon>Pseudomonadati</taxon>
        <taxon>Pseudomonadota</taxon>
        <taxon>Gammaproteobacteria</taxon>
        <taxon>Enterobacterales</taxon>
        <taxon>Enterobacteriaceae</taxon>
        <taxon>Escherichia</taxon>
    </lineage>
</organism>